<dbReference type="EC" id="2.3.1.286" evidence="2"/>
<dbReference type="EMBL" id="LN999946">
    <property type="protein sequence ID" value="CZU00209.1"/>
    <property type="molecule type" value="Genomic_DNA"/>
</dbReference>
<dbReference type="RefSeq" id="XP_001348663.1">
    <property type="nucleotide sequence ID" value="XM_001348627.1"/>
</dbReference>
<dbReference type="SMR" id="Q8IKW2"/>
<dbReference type="FunCoup" id="Q8IKW2">
    <property type="interactions" value="743"/>
</dbReference>
<dbReference type="STRING" id="36329.Q8IKW2"/>
<dbReference type="PaxDb" id="5833-PF14_0489"/>
<dbReference type="EnsemblProtists" id="CZU00209">
    <property type="protein sequence ID" value="CZU00209"/>
    <property type="gene ID" value="PF3D7_1451400"/>
</dbReference>
<dbReference type="GeneID" id="812071"/>
<dbReference type="KEGG" id="pfa:PF3D7_1451400"/>
<dbReference type="VEuPathDB" id="PlasmoDB:PF3D7_1451400"/>
<dbReference type="HOGENOM" id="CLU_267116_0_0_1"/>
<dbReference type="InParanoid" id="Q8IKW2"/>
<dbReference type="OMA" id="FCGRRYL"/>
<dbReference type="OrthoDB" id="424302at2759"/>
<dbReference type="PhylomeDB" id="Q8IKW2"/>
<dbReference type="Proteomes" id="UP000001450">
    <property type="component" value="Chromosome 14"/>
</dbReference>
<dbReference type="GO" id="GO:0046872">
    <property type="term" value="F:metal ion binding"/>
    <property type="evidence" value="ECO:0007669"/>
    <property type="project" value="UniProtKB-KW"/>
</dbReference>
<dbReference type="GO" id="GO:0070403">
    <property type="term" value="F:NAD+ binding"/>
    <property type="evidence" value="ECO:0007669"/>
    <property type="project" value="InterPro"/>
</dbReference>
<dbReference type="GO" id="GO:0034979">
    <property type="term" value="F:NAD-dependent protein lysine deacetylase activity"/>
    <property type="evidence" value="ECO:0007669"/>
    <property type="project" value="UniProtKB-EC"/>
</dbReference>
<dbReference type="GO" id="GO:0006355">
    <property type="term" value="P:regulation of DNA-templated transcription"/>
    <property type="evidence" value="ECO:0000314"/>
    <property type="project" value="GeneDB"/>
</dbReference>
<dbReference type="Gene3D" id="2.20.28.200">
    <property type="match status" value="1"/>
</dbReference>
<dbReference type="Gene3D" id="3.40.50.1220">
    <property type="entry name" value="TPP-binding domain"/>
    <property type="match status" value="2"/>
</dbReference>
<dbReference type="InterPro" id="IPR029035">
    <property type="entry name" value="DHS-like_NAD/FAD-binding_dom"/>
</dbReference>
<dbReference type="InterPro" id="IPR003000">
    <property type="entry name" value="Sirtuin"/>
</dbReference>
<dbReference type="InterPro" id="IPR026590">
    <property type="entry name" value="Ssirtuin_cat_dom"/>
</dbReference>
<dbReference type="PANTHER" id="PTHR36911:SF3">
    <property type="entry name" value="GATA ZINC FINGER DOMAIN-CONTAINING PROTEIN 4-RELATED"/>
    <property type="match status" value="1"/>
</dbReference>
<dbReference type="PANTHER" id="PTHR36911">
    <property type="entry name" value="LIM ZINC-BINDING DOMAIN-CONTAINING PROTEIN-RELATED"/>
    <property type="match status" value="1"/>
</dbReference>
<dbReference type="Pfam" id="PF02146">
    <property type="entry name" value="SIR2"/>
    <property type="match status" value="2"/>
</dbReference>
<dbReference type="SUPFAM" id="SSF52467">
    <property type="entry name" value="DHS-like NAD/FAD-binding domain"/>
    <property type="match status" value="1"/>
</dbReference>
<dbReference type="PROSITE" id="PS50305">
    <property type="entry name" value="SIRTUIN"/>
    <property type="match status" value="1"/>
</dbReference>
<name>SIR2B_PLAF7</name>
<protein>
    <recommendedName>
        <fullName>NAD-dependent protein deacetylase Sir2B</fullName>
        <shortName evidence="5">PfSir2B</shortName>
        <ecNumber evidence="2">2.3.1.286</ecNumber>
    </recommendedName>
    <alternativeName>
        <fullName>Regulatory protein SIR2 homolog B</fullName>
    </alternativeName>
    <alternativeName>
        <fullName>SIR2-like protein B</fullName>
    </alternativeName>
</protein>
<sequence>MSCMNYASRLSKNEYKGPLGEEEFFEDTEEEKKKVKELIEKIRSSEYIVVHSGAGISTSSGLQDFRGPTGIWTNEHLNELKNKKKRNHDFKDNKRKLKSNDINCKNTSDMCSPSFFHKEKKENTLNIVKRERYYNEDNVDMNACNERVVHPNHVYVNHEDDNNNNNNNNNNDNNLYNNVYNSVGSNDHTNKESILIKKENNSENVRKDIHDKVNTKNVKKIDVKETNNLDPENYVIFGKRKKKVIELHLALPSKTHIMINELINKNIIKFMITQNIDSLHHRCGKHFSKTAEIHGNIFTERCDFCGRRYLRDYLISTISFKPTGSLCFLCSFPPIGVCTDVLLDWNNSYEEFFHLNSIKHSQIADFHFCLGSSFYIVPASSYPSKKKYANANSYSCVINYQKSFLSKEVNLNIHSNVNNISDIIIKEFSLNPLSIRSARITIVRCPINTLDVICDKLISIHNIKMKHKSMRQHSIDYSQMGNKDEKYNNEKYVKRNMTECLYYNKEGECYEKRKYKLMEKKFFPNNQQNEFIPNRINIFEQKFHEHNNNNNNNNNNNNNNNNNNNNNNNNNNNNNNNNNNSSSSIDSSCSINSNYHISKNINPDFSFVENQSNIYENYKEQTFILICPMIINIKTVRLESFHKVYIKLLDDIKGLWFIKTNFSCILEVELWYHSFILLKLDFNKSDPFIQLNAWNVNVAYTYGDDIDDFDYFKNDENIKKPFNLYKNKYISNMRREGHVNNLYTLDNEKVKSNTSNNNNNNNNNNNNNNNNNNNNNNNNNNNNNNNNNNNNNNNNNDNNNNNISDHNIYDDHNNNNNKNHNNYDKDNSNESYYCSEILNEHVHVGYNPNNYEPNCKVYILAYLDNLRTRNINNNVNNNNFSRFNLTQSCKLLYNIYCVLNKDNEQKKNSTIKETYDKLDYFIKNFDFNRDSCLYTNNFINMLIQNERHGNQSRYKFRERRKRLLNDYSSCSSDDDQSGKNIFIFYNLYMNQYKKKEDNEINDIYKKYDVHEKNIYDESKQYVHKVRVRTDLINHKSVYKILKNNYLVNINNMKLMEKKNNSEKLFLINDKDNNSLLSINNKENFNCIPSRQNNVKKNSEYMHEEENNKTNSNENIARLNNNDFIQVMETEKQKKYNSFDKYNSDRSSINDTFDEIKYNKNNDNNNDDNNYDDNKNDDDNNNDDNNNNDDNNNNDDNNNNDDNNNGYIYSPVLFINKKFKLGELVYKIPKYVKPQKIYTPYKKISRNKKYSNTLQKDRYEKWKMLYEELINNENKTYIIDSVLYKEISYLPYWILNYVNDLFECM</sequence>
<organism>
    <name type="scientific">Plasmodium falciparum (isolate 3D7)</name>
    <dbReference type="NCBI Taxonomy" id="36329"/>
    <lineage>
        <taxon>Eukaryota</taxon>
        <taxon>Sar</taxon>
        <taxon>Alveolata</taxon>
        <taxon>Apicomplexa</taxon>
        <taxon>Aconoidasida</taxon>
        <taxon>Haemosporida</taxon>
        <taxon>Plasmodiidae</taxon>
        <taxon>Plasmodium</taxon>
        <taxon>Plasmodium (Laverania)</taxon>
    </lineage>
</organism>
<feature type="chain" id="PRO_0000417367" description="NAD-dependent protein deacetylase Sir2B">
    <location>
        <begin position="1"/>
        <end position="1304"/>
    </location>
</feature>
<feature type="domain" description="Deacetylase sirtuin-type" evidence="2">
    <location>
        <begin position="28"/>
        <end position="466"/>
    </location>
</feature>
<feature type="region of interest" description="Disordered" evidence="3">
    <location>
        <begin position="545"/>
        <end position="585"/>
    </location>
</feature>
<feature type="region of interest" description="Disordered" evidence="3">
    <location>
        <begin position="749"/>
        <end position="827"/>
    </location>
</feature>
<feature type="region of interest" description="Disordered" evidence="3">
    <location>
        <begin position="1154"/>
        <end position="1203"/>
    </location>
</feature>
<feature type="compositionally biased region" description="Low complexity" evidence="3">
    <location>
        <begin position="548"/>
        <end position="585"/>
    </location>
</feature>
<feature type="compositionally biased region" description="Low complexity" evidence="3">
    <location>
        <begin position="756"/>
        <end position="806"/>
    </location>
</feature>
<feature type="compositionally biased region" description="Low complexity" evidence="3">
    <location>
        <begin position="1182"/>
        <end position="1203"/>
    </location>
</feature>
<feature type="active site" description="Proton acceptor" evidence="2">
    <location>
        <position position="294"/>
    </location>
</feature>
<feature type="binding site" evidence="1">
    <location>
        <begin position="53"/>
        <end position="72"/>
    </location>
    <ligand>
        <name>NAD(+)</name>
        <dbReference type="ChEBI" id="CHEBI:57540"/>
    </ligand>
</feature>
<feature type="binding site" evidence="1">
    <location>
        <begin position="274"/>
        <end position="277"/>
    </location>
    <ligand>
        <name>NAD(+)</name>
        <dbReference type="ChEBI" id="CHEBI:57540"/>
    </ligand>
</feature>
<feature type="binding site" evidence="2">
    <location>
        <position position="302"/>
    </location>
    <ligand>
        <name>Zn(2+)</name>
        <dbReference type="ChEBI" id="CHEBI:29105"/>
    </ligand>
</feature>
<feature type="binding site" evidence="2">
    <location>
        <position position="305"/>
    </location>
    <ligand>
        <name>Zn(2+)</name>
        <dbReference type="ChEBI" id="CHEBI:29105"/>
    </ligand>
</feature>
<feature type="binding site" evidence="2">
    <location>
        <position position="327"/>
    </location>
    <ligand>
        <name>Zn(2+)</name>
        <dbReference type="ChEBI" id="CHEBI:29105"/>
    </ligand>
</feature>
<feature type="binding site" evidence="2">
    <location>
        <position position="330"/>
    </location>
    <ligand>
        <name>Zn(2+)</name>
        <dbReference type="ChEBI" id="CHEBI:29105"/>
    </ligand>
</feature>
<feature type="binding site" evidence="1">
    <location>
        <begin position="371"/>
        <end position="373"/>
    </location>
    <ligand>
        <name>NAD(+)</name>
        <dbReference type="ChEBI" id="CHEBI:57540"/>
    </ligand>
</feature>
<feature type="binding site" evidence="1">
    <location>
        <begin position="399"/>
        <end position="401"/>
    </location>
    <ligand>
        <name>NAD(+)</name>
        <dbReference type="ChEBI" id="CHEBI:57540"/>
    </ligand>
</feature>
<feature type="binding site" evidence="1">
    <location>
        <position position="417"/>
    </location>
    <ligand>
        <name>NAD(+)</name>
        <dbReference type="ChEBI" id="CHEBI:57540"/>
    </ligand>
</feature>
<reference key="1">
    <citation type="journal article" date="2002" name="Nature">
        <title>Genome sequence of the human malaria parasite Plasmodium falciparum.</title>
        <authorList>
            <person name="Gardner M.J."/>
            <person name="Hall N."/>
            <person name="Fung E."/>
            <person name="White O."/>
            <person name="Berriman M."/>
            <person name="Hyman R.W."/>
            <person name="Carlton J.M."/>
            <person name="Pain A."/>
            <person name="Nelson K.E."/>
            <person name="Bowman S."/>
            <person name="Paulsen I.T."/>
            <person name="James K.D."/>
            <person name="Eisen J.A."/>
            <person name="Rutherford K.M."/>
            <person name="Salzberg S.L."/>
            <person name="Craig A."/>
            <person name="Kyes S."/>
            <person name="Chan M.-S."/>
            <person name="Nene V."/>
            <person name="Shallom S.J."/>
            <person name="Suh B."/>
            <person name="Peterson J."/>
            <person name="Angiuoli S."/>
            <person name="Pertea M."/>
            <person name="Allen J."/>
            <person name="Selengut J."/>
            <person name="Haft D."/>
            <person name="Mather M.W."/>
            <person name="Vaidya A.B."/>
            <person name="Martin D.M.A."/>
            <person name="Fairlamb A.H."/>
            <person name="Fraunholz M.J."/>
            <person name="Roos D.S."/>
            <person name="Ralph S.A."/>
            <person name="McFadden G.I."/>
            <person name="Cummings L.M."/>
            <person name="Subramanian G.M."/>
            <person name="Mungall C."/>
            <person name="Venter J.C."/>
            <person name="Carucci D.J."/>
            <person name="Hoffman S.L."/>
            <person name="Newbold C."/>
            <person name="Davis R.W."/>
            <person name="Fraser C.M."/>
            <person name="Barrell B.G."/>
        </authorList>
    </citation>
    <scope>NUCLEOTIDE SEQUENCE [LARGE SCALE GENOMIC DNA]</scope>
    <source>
        <strain>3D7</strain>
    </source>
</reference>
<reference key="2">
    <citation type="journal article" date="2009" name="PLoS Biol.">
        <title>Sir2 paralogues cooperate to regulate virulence genes and antigenic variation in Plasmodium falciparum.</title>
        <authorList>
            <person name="Tonkin C.J."/>
            <person name="Carret C.K."/>
            <person name="Duraisingh M.T."/>
            <person name="Voss T.S."/>
            <person name="Ralph S.A."/>
            <person name="Hommel M."/>
            <person name="Duffy M.F."/>
            <person name="Silva L.M."/>
            <person name="Scherf A."/>
            <person name="Ivens A."/>
            <person name="Speed T.P."/>
            <person name="Beeson J.G."/>
            <person name="Cowman A.F."/>
        </authorList>
    </citation>
    <scope>FUNCTION IN VAR GENE REPRESSION</scope>
</reference>
<comment type="function">
    <text evidence="4">Regulates the expression of the surface antigen-coding var genes central to the malaria pathogenesis. Cooperates with Sir2A to mediate silencing and mutual exclusive expression of only 1 of the 60 subtelomeric var genes at a time, coding for functionally different but epitopically variant versions of the erythrocyte membrane protein 1 (PfEMP1) molecule, to evade the detection by host immune surveillance.</text>
</comment>
<comment type="catalytic activity">
    <reaction evidence="2">
        <text>N(6)-acetyl-L-lysyl-[protein] + NAD(+) + H2O = 2''-O-acetyl-ADP-D-ribose + nicotinamide + L-lysyl-[protein]</text>
        <dbReference type="Rhea" id="RHEA:43636"/>
        <dbReference type="Rhea" id="RHEA-COMP:9752"/>
        <dbReference type="Rhea" id="RHEA-COMP:10731"/>
        <dbReference type="ChEBI" id="CHEBI:15377"/>
        <dbReference type="ChEBI" id="CHEBI:17154"/>
        <dbReference type="ChEBI" id="CHEBI:29969"/>
        <dbReference type="ChEBI" id="CHEBI:57540"/>
        <dbReference type="ChEBI" id="CHEBI:61930"/>
        <dbReference type="ChEBI" id="CHEBI:83767"/>
        <dbReference type="EC" id="2.3.1.286"/>
    </reaction>
</comment>
<comment type="cofactor">
    <cofactor evidence="1">
        <name>Zn(2+)</name>
        <dbReference type="ChEBI" id="CHEBI:29105"/>
    </cofactor>
    <text evidence="1">Binds 1 zinc ion per subunit.</text>
</comment>
<comment type="similarity">
    <text evidence="6">Belongs to the sirtuin family. Class IV subfamily.</text>
</comment>
<accession>Q8IKW2</accession>
<accession>A0A144A2E0</accession>
<evidence type="ECO:0000250" key="1">
    <source>
        <dbReference type="UniProtKB" id="Q9NXA8"/>
    </source>
</evidence>
<evidence type="ECO:0000255" key="2">
    <source>
        <dbReference type="PROSITE-ProRule" id="PRU00236"/>
    </source>
</evidence>
<evidence type="ECO:0000256" key="3">
    <source>
        <dbReference type="SAM" id="MobiDB-lite"/>
    </source>
</evidence>
<evidence type="ECO:0000269" key="4">
    <source>
    </source>
</evidence>
<evidence type="ECO:0000303" key="5">
    <source>
    </source>
</evidence>
<evidence type="ECO:0000305" key="6"/>
<gene>
    <name evidence="5" type="primary">Sir2B</name>
    <name type="ORF">PF14_0489</name>
    <name type="ORF">PF3D7_1451400</name>
</gene>
<keyword id="KW-0479">Metal-binding</keyword>
<keyword id="KW-0520">NAD</keyword>
<keyword id="KW-1185">Reference proteome</keyword>
<keyword id="KW-0808">Transferase</keyword>
<keyword id="KW-0862">Zinc</keyword>
<proteinExistence type="evidence at protein level"/>